<gene>
    <name evidence="1" type="primary">uvrB</name>
    <name type="ordered locus">RSal33209_2293</name>
</gene>
<dbReference type="EMBL" id="CP000910">
    <property type="protein sequence ID" value="ABY24024.1"/>
    <property type="molecule type" value="Genomic_DNA"/>
</dbReference>
<dbReference type="RefSeq" id="WP_012245689.1">
    <property type="nucleotide sequence ID" value="NC_010168.1"/>
</dbReference>
<dbReference type="SMR" id="A9WT85"/>
<dbReference type="STRING" id="288705.RSal33209_2293"/>
<dbReference type="KEGG" id="rsa:RSal33209_2293"/>
<dbReference type="eggNOG" id="COG0556">
    <property type="taxonomic scope" value="Bacteria"/>
</dbReference>
<dbReference type="HOGENOM" id="CLU_009621_2_1_11"/>
<dbReference type="Proteomes" id="UP000002007">
    <property type="component" value="Chromosome"/>
</dbReference>
<dbReference type="GO" id="GO:0005737">
    <property type="term" value="C:cytoplasm"/>
    <property type="evidence" value="ECO:0007669"/>
    <property type="project" value="UniProtKB-SubCell"/>
</dbReference>
<dbReference type="GO" id="GO:0009380">
    <property type="term" value="C:excinuclease repair complex"/>
    <property type="evidence" value="ECO:0007669"/>
    <property type="project" value="InterPro"/>
</dbReference>
<dbReference type="GO" id="GO:0005524">
    <property type="term" value="F:ATP binding"/>
    <property type="evidence" value="ECO:0007669"/>
    <property type="project" value="UniProtKB-UniRule"/>
</dbReference>
<dbReference type="GO" id="GO:0016887">
    <property type="term" value="F:ATP hydrolysis activity"/>
    <property type="evidence" value="ECO:0007669"/>
    <property type="project" value="InterPro"/>
</dbReference>
<dbReference type="GO" id="GO:0003677">
    <property type="term" value="F:DNA binding"/>
    <property type="evidence" value="ECO:0007669"/>
    <property type="project" value="UniProtKB-UniRule"/>
</dbReference>
<dbReference type="GO" id="GO:0009381">
    <property type="term" value="F:excinuclease ABC activity"/>
    <property type="evidence" value="ECO:0007669"/>
    <property type="project" value="UniProtKB-UniRule"/>
</dbReference>
<dbReference type="GO" id="GO:0004386">
    <property type="term" value="F:helicase activity"/>
    <property type="evidence" value="ECO:0007669"/>
    <property type="project" value="UniProtKB-KW"/>
</dbReference>
<dbReference type="GO" id="GO:0006289">
    <property type="term" value="P:nucleotide-excision repair"/>
    <property type="evidence" value="ECO:0007669"/>
    <property type="project" value="UniProtKB-UniRule"/>
</dbReference>
<dbReference type="GO" id="GO:0009432">
    <property type="term" value="P:SOS response"/>
    <property type="evidence" value="ECO:0007669"/>
    <property type="project" value="UniProtKB-UniRule"/>
</dbReference>
<dbReference type="CDD" id="cd17916">
    <property type="entry name" value="DEXHc_UvrB"/>
    <property type="match status" value="1"/>
</dbReference>
<dbReference type="CDD" id="cd18790">
    <property type="entry name" value="SF2_C_UvrB"/>
    <property type="match status" value="1"/>
</dbReference>
<dbReference type="FunFam" id="4.10.860.10:FF:000009">
    <property type="entry name" value="UvrABC system protein B"/>
    <property type="match status" value="1"/>
</dbReference>
<dbReference type="Gene3D" id="3.40.50.300">
    <property type="entry name" value="P-loop containing nucleotide triphosphate hydrolases"/>
    <property type="match status" value="3"/>
</dbReference>
<dbReference type="Gene3D" id="4.10.860.10">
    <property type="entry name" value="UVR domain"/>
    <property type="match status" value="1"/>
</dbReference>
<dbReference type="HAMAP" id="MF_00204">
    <property type="entry name" value="UvrB"/>
    <property type="match status" value="1"/>
</dbReference>
<dbReference type="InterPro" id="IPR006935">
    <property type="entry name" value="Helicase/UvrB_N"/>
</dbReference>
<dbReference type="InterPro" id="IPR014001">
    <property type="entry name" value="Helicase_ATP-bd"/>
</dbReference>
<dbReference type="InterPro" id="IPR001650">
    <property type="entry name" value="Helicase_C-like"/>
</dbReference>
<dbReference type="InterPro" id="IPR027417">
    <property type="entry name" value="P-loop_NTPase"/>
</dbReference>
<dbReference type="InterPro" id="IPR001943">
    <property type="entry name" value="UVR_dom"/>
</dbReference>
<dbReference type="InterPro" id="IPR036876">
    <property type="entry name" value="UVR_dom_sf"/>
</dbReference>
<dbReference type="InterPro" id="IPR004807">
    <property type="entry name" value="UvrB"/>
</dbReference>
<dbReference type="InterPro" id="IPR041471">
    <property type="entry name" value="UvrB_inter"/>
</dbReference>
<dbReference type="InterPro" id="IPR024759">
    <property type="entry name" value="UvrB_YAD/RRR_dom"/>
</dbReference>
<dbReference type="NCBIfam" id="NF003673">
    <property type="entry name" value="PRK05298.1"/>
    <property type="match status" value="1"/>
</dbReference>
<dbReference type="NCBIfam" id="TIGR00631">
    <property type="entry name" value="uvrb"/>
    <property type="match status" value="1"/>
</dbReference>
<dbReference type="PANTHER" id="PTHR24029">
    <property type="entry name" value="UVRABC SYSTEM PROTEIN B"/>
    <property type="match status" value="1"/>
</dbReference>
<dbReference type="PANTHER" id="PTHR24029:SF0">
    <property type="entry name" value="UVRABC SYSTEM PROTEIN B"/>
    <property type="match status" value="1"/>
</dbReference>
<dbReference type="Pfam" id="PF00271">
    <property type="entry name" value="Helicase_C"/>
    <property type="match status" value="1"/>
</dbReference>
<dbReference type="Pfam" id="PF04851">
    <property type="entry name" value="ResIII"/>
    <property type="match status" value="1"/>
</dbReference>
<dbReference type="Pfam" id="PF02151">
    <property type="entry name" value="UVR"/>
    <property type="match status" value="1"/>
</dbReference>
<dbReference type="Pfam" id="PF12344">
    <property type="entry name" value="UvrB"/>
    <property type="match status" value="1"/>
</dbReference>
<dbReference type="Pfam" id="PF17757">
    <property type="entry name" value="UvrB_inter"/>
    <property type="match status" value="1"/>
</dbReference>
<dbReference type="SMART" id="SM00487">
    <property type="entry name" value="DEXDc"/>
    <property type="match status" value="1"/>
</dbReference>
<dbReference type="SMART" id="SM00490">
    <property type="entry name" value="HELICc"/>
    <property type="match status" value="1"/>
</dbReference>
<dbReference type="SUPFAM" id="SSF46600">
    <property type="entry name" value="C-terminal UvrC-binding domain of UvrB"/>
    <property type="match status" value="1"/>
</dbReference>
<dbReference type="SUPFAM" id="SSF52540">
    <property type="entry name" value="P-loop containing nucleoside triphosphate hydrolases"/>
    <property type="match status" value="2"/>
</dbReference>
<dbReference type="PROSITE" id="PS51192">
    <property type="entry name" value="HELICASE_ATP_BIND_1"/>
    <property type="match status" value="1"/>
</dbReference>
<dbReference type="PROSITE" id="PS51194">
    <property type="entry name" value="HELICASE_CTER"/>
    <property type="match status" value="1"/>
</dbReference>
<dbReference type="PROSITE" id="PS50151">
    <property type="entry name" value="UVR"/>
    <property type="match status" value="1"/>
</dbReference>
<proteinExistence type="inferred from homology"/>
<evidence type="ECO:0000255" key="1">
    <source>
        <dbReference type="HAMAP-Rule" id="MF_00204"/>
    </source>
</evidence>
<evidence type="ECO:0000256" key="2">
    <source>
        <dbReference type="SAM" id="MobiDB-lite"/>
    </source>
</evidence>
<sequence length="693" mass="78025">MSLAQQINRVVAPFEVISEYQPAGDQPAAIADLTERINNGEKDVVLLGATGTGKSATTAWLIEQVQRPTLVMVQNKTLAAQLANEFRELLPNNAVEYFVSYYDYYQPEAYVPQTDTFIEKDSSVNEEVERLRYSATNSLLTRRDVIVVATVSCIYGLGTPEEYVAGMVTLKQGDRVDRDQLLRQFVGIQYTRNDIDFHRGTFRVRGDTVEITPMYEEQALRIEFFGDEIEKIFTLHPLTGEIIREENEMYVFPASHYVAGPERMAKAITRIEDELAVRLKELEGQNKLLEAQRLRMRTTYDLEMMQQMGFCNGIENYSRHIDGRDSGSAPSCLIDYFPDDFLLVIDESHVTLPQIGAMYEGDMSRKRTLVDHGFRLPSAMDNRPLKWDEFLERVGQTVYLSATPGKYEMAKADGVVQQIIRPTGLIDPEVIIKPTKGQIDDLLGEIRTRVERDERVLVTTLTKRMAEDLTEYLLGHGVKVQYLHSDVDTLRRVELLRELRLGVFDVLVGINLLREGLDLPEVSLVSILDADKEGFLRSATSLIQTIGRAARNVSGEVHMYADKITDSMAKAIDETNRRRAIQVAYNTEHGVDPTPLRKRIADITDSLAREDADTKSLLESAGKGRSRGKAPVPVRHDGLAAVPAEDLVDLIEQLTAQMHSAAGELQFELAARLRDEVGDLKKELRQMQSAGHA</sequence>
<name>UVRB_RENSM</name>
<reference key="1">
    <citation type="journal article" date="2008" name="J. Bacteriol.">
        <title>Genome sequence of the fish pathogen Renibacterium salmoninarum suggests reductive evolution away from an environmental Arthrobacter ancestor.</title>
        <authorList>
            <person name="Wiens G.D."/>
            <person name="Rockey D.D."/>
            <person name="Wu Z."/>
            <person name="Chang J."/>
            <person name="Levy R."/>
            <person name="Crane S."/>
            <person name="Chen D.S."/>
            <person name="Capri G.R."/>
            <person name="Burnett J.R."/>
            <person name="Sudheesh P.S."/>
            <person name="Schipma M.J."/>
            <person name="Burd H."/>
            <person name="Bhattacharyya A."/>
            <person name="Rhodes L.D."/>
            <person name="Kaul R."/>
            <person name="Strom M.S."/>
        </authorList>
    </citation>
    <scope>NUCLEOTIDE SEQUENCE [LARGE SCALE GENOMIC DNA]</scope>
    <source>
        <strain>ATCC 33209 / DSM 20767 / JCM 11484 / NBRC 15589 / NCIMB 2235</strain>
    </source>
</reference>
<keyword id="KW-0067">ATP-binding</keyword>
<keyword id="KW-0963">Cytoplasm</keyword>
<keyword id="KW-0227">DNA damage</keyword>
<keyword id="KW-0228">DNA excision</keyword>
<keyword id="KW-0234">DNA repair</keyword>
<keyword id="KW-0267">Excision nuclease</keyword>
<keyword id="KW-0347">Helicase</keyword>
<keyword id="KW-0378">Hydrolase</keyword>
<keyword id="KW-0547">Nucleotide-binding</keyword>
<keyword id="KW-1185">Reference proteome</keyword>
<keyword id="KW-0742">SOS response</keyword>
<comment type="function">
    <text evidence="1">The UvrABC repair system catalyzes the recognition and processing of DNA lesions. A damage recognition complex composed of 2 UvrA and 2 UvrB subunits scans DNA for abnormalities. Upon binding of the UvrA(2)B(2) complex to a putative damaged site, the DNA wraps around one UvrB monomer. DNA wrap is dependent on ATP binding by UvrB and probably causes local melting of the DNA helix, facilitating insertion of UvrB beta-hairpin between the DNA strands. Then UvrB probes one DNA strand for the presence of a lesion. If a lesion is found the UvrA subunits dissociate and the UvrB-DNA preincision complex is formed. This complex is subsequently bound by UvrC and the second UvrB is released. If no lesion is found, the DNA wraps around the other UvrB subunit that will check the other stand for damage.</text>
</comment>
<comment type="subunit">
    <text evidence="1">Forms a heterotetramer with UvrA during the search for lesions. Interacts with UvrC in an incision complex.</text>
</comment>
<comment type="subcellular location">
    <subcellularLocation>
        <location evidence="1">Cytoplasm</location>
    </subcellularLocation>
</comment>
<comment type="domain">
    <text evidence="1">The beta-hairpin motif is involved in DNA binding.</text>
</comment>
<comment type="similarity">
    <text evidence="1">Belongs to the UvrB family.</text>
</comment>
<protein>
    <recommendedName>
        <fullName evidence="1">UvrABC system protein B</fullName>
        <shortName evidence="1">Protein UvrB</shortName>
    </recommendedName>
    <alternativeName>
        <fullName evidence="1">Excinuclease ABC subunit B</fullName>
    </alternativeName>
</protein>
<feature type="chain" id="PRO_1000077912" description="UvrABC system protein B">
    <location>
        <begin position="1"/>
        <end position="693"/>
    </location>
</feature>
<feature type="domain" description="Helicase ATP-binding" evidence="1">
    <location>
        <begin position="35"/>
        <end position="188"/>
    </location>
</feature>
<feature type="domain" description="Helicase C-terminal" evidence="1">
    <location>
        <begin position="438"/>
        <end position="600"/>
    </location>
</feature>
<feature type="domain" description="UVR" evidence="1">
    <location>
        <begin position="648"/>
        <end position="683"/>
    </location>
</feature>
<feature type="region of interest" description="Disordered" evidence="2">
    <location>
        <begin position="612"/>
        <end position="634"/>
    </location>
</feature>
<feature type="short sequence motif" description="Beta-hairpin">
    <location>
        <begin position="101"/>
        <end position="124"/>
    </location>
</feature>
<feature type="binding site" evidence="1">
    <location>
        <begin position="48"/>
        <end position="55"/>
    </location>
    <ligand>
        <name>ATP</name>
        <dbReference type="ChEBI" id="CHEBI:30616"/>
    </ligand>
</feature>
<organism>
    <name type="scientific">Renibacterium salmoninarum (strain ATCC 33209 / DSM 20767 / JCM 11484 / NBRC 15589 / NCIMB 2235)</name>
    <dbReference type="NCBI Taxonomy" id="288705"/>
    <lineage>
        <taxon>Bacteria</taxon>
        <taxon>Bacillati</taxon>
        <taxon>Actinomycetota</taxon>
        <taxon>Actinomycetes</taxon>
        <taxon>Micrococcales</taxon>
        <taxon>Micrococcaceae</taxon>
        <taxon>Renibacterium</taxon>
    </lineage>
</organism>
<accession>A9WT85</accession>